<sequence>MSMSDPIADMLTRIRNAQMVEKVSVAMPSSKVKVAIAQVLKDEGYIDDFAVKAEGAKSELNIALKYYAGRPVIERLERVSKPGLRVYRGRNDIPQVMNGLGVAIVSTPKGVMTDRKARATGVGGEVICYVA</sequence>
<dbReference type="EMBL" id="CP000614">
    <property type="protein sequence ID" value="ABO53357.1"/>
    <property type="molecule type" value="Genomic_DNA"/>
</dbReference>
<dbReference type="SMR" id="A4JAQ4"/>
<dbReference type="KEGG" id="bvi:Bcep1808_0344"/>
<dbReference type="eggNOG" id="COG0096">
    <property type="taxonomic scope" value="Bacteria"/>
</dbReference>
<dbReference type="HOGENOM" id="CLU_098428_0_0_4"/>
<dbReference type="Proteomes" id="UP000002287">
    <property type="component" value="Chromosome 1"/>
</dbReference>
<dbReference type="GO" id="GO:1990904">
    <property type="term" value="C:ribonucleoprotein complex"/>
    <property type="evidence" value="ECO:0007669"/>
    <property type="project" value="UniProtKB-KW"/>
</dbReference>
<dbReference type="GO" id="GO:0005840">
    <property type="term" value="C:ribosome"/>
    <property type="evidence" value="ECO:0007669"/>
    <property type="project" value="UniProtKB-KW"/>
</dbReference>
<dbReference type="GO" id="GO:0019843">
    <property type="term" value="F:rRNA binding"/>
    <property type="evidence" value="ECO:0007669"/>
    <property type="project" value="UniProtKB-UniRule"/>
</dbReference>
<dbReference type="GO" id="GO:0003735">
    <property type="term" value="F:structural constituent of ribosome"/>
    <property type="evidence" value="ECO:0007669"/>
    <property type="project" value="InterPro"/>
</dbReference>
<dbReference type="GO" id="GO:0006412">
    <property type="term" value="P:translation"/>
    <property type="evidence" value="ECO:0007669"/>
    <property type="project" value="UniProtKB-UniRule"/>
</dbReference>
<dbReference type="FunFam" id="3.30.1370.30:FF:000003">
    <property type="entry name" value="30S ribosomal protein S8"/>
    <property type="match status" value="1"/>
</dbReference>
<dbReference type="FunFam" id="3.30.1490.10:FF:000001">
    <property type="entry name" value="30S ribosomal protein S8"/>
    <property type="match status" value="1"/>
</dbReference>
<dbReference type="Gene3D" id="3.30.1370.30">
    <property type="match status" value="1"/>
</dbReference>
<dbReference type="Gene3D" id="3.30.1490.10">
    <property type="match status" value="1"/>
</dbReference>
<dbReference type="HAMAP" id="MF_01302_B">
    <property type="entry name" value="Ribosomal_uS8_B"/>
    <property type="match status" value="1"/>
</dbReference>
<dbReference type="InterPro" id="IPR000630">
    <property type="entry name" value="Ribosomal_uS8"/>
</dbReference>
<dbReference type="InterPro" id="IPR047863">
    <property type="entry name" value="Ribosomal_uS8_CS"/>
</dbReference>
<dbReference type="InterPro" id="IPR035987">
    <property type="entry name" value="Ribosomal_uS8_sf"/>
</dbReference>
<dbReference type="NCBIfam" id="NF001109">
    <property type="entry name" value="PRK00136.1"/>
    <property type="match status" value="1"/>
</dbReference>
<dbReference type="PANTHER" id="PTHR11758">
    <property type="entry name" value="40S RIBOSOMAL PROTEIN S15A"/>
    <property type="match status" value="1"/>
</dbReference>
<dbReference type="Pfam" id="PF00410">
    <property type="entry name" value="Ribosomal_S8"/>
    <property type="match status" value="1"/>
</dbReference>
<dbReference type="SUPFAM" id="SSF56047">
    <property type="entry name" value="Ribosomal protein S8"/>
    <property type="match status" value="1"/>
</dbReference>
<dbReference type="PROSITE" id="PS00053">
    <property type="entry name" value="RIBOSOMAL_S8"/>
    <property type="match status" value="1"/>
</dbReference>
<reference key="1">
    <citation type="submission" date="2007-03" db="EMBL/GenBank/DDBJ databases">
        <title>Complete sequence of chromosome 1 of Burkholderia vietnamiensis G4.</title>
        <authorList>
            <consortium name="US DOE Joint Genome Institute"/>
            <person name="Copeland A."/>
            <person name="Lucas S."/>
            <person name="Lapidus A."/>
            <person name="Barry K."/>
            <person name="Detter J.C."/>
            <person name="Glavina del Rio T."/>
            <person name="Hammon N."/>
            <person name="Israni S."/>
            <person name="Dalin E."/>
            <person name="Tice H."/>
            <person name="Pitluck S."/>
            <person name="Chain P."/>
            <person name="Malfatti S."/>
            <person name="Shin M."/>
            <person name="Vergez L."/>
            <person name="Schmutz J."/>
            <person name="Larimer F."/>
            <person name="Land M."/>
            <person name="Hauser L."/>
            <person name="Kyrpides N."/>
            <person name="Tiedje J."/>
            <person name="Richardson P."/>
        </authorList>
    </citation>
    <scope>NUCLEOTIDE SEQUENCE [LARGE SCALE GENOMIC DNA]</scope>
    <source>
        <strain>G4 / LMG 22486</strain>
    </source>
</reference>
<keyword id="KW-0687">Ribonucleoprotein</keyword>
<keyword id="KW-0689">Ribosomal protein</keyword>
<keyword id="KW-0694">RNA-binding</keyword>
<keyword id="KW-0699">rRNA-binding</keyword>
<name>RS8_BURVG</name>
<protein>
    <recommendedName>
        <fullName evidence="1">Small ribosomal subunit protein uS8</fullName>
    </recommendedName>
    <alternativeName>
        <fullName evidence="2">30S ribosomal protein S8</fullName>
    </alternativeName>
</protein>
<comment type="function">
    <text evidence="1">One of the primary rRNA binding proteins, it binds directly to 16S rRNA central domain where it helps coordinate assembly of the platform of the 30S subunit.</text>
</comment>
<comment type="subunit">
    <text evidence="1">Part of the 30S ribosomal subunit. Contacts proteins S5 and S12.</text>
</comment>
<comment type="similarity">
    <text evidence="1">Belongs to the universal ribosomal protein uS8 family.</text>
</comment>
<proteinExistence type="inferred from homology"/>
<accession>A4JAQ4</accession>
<organism>
    <name type="scientific">Burkholderia vietnamiensis (strain G4 / LMG 22486)</name>
    <name type="common">Burkholderia cepacia (strain R1808)</name>
    <dbReference type="NCBI Taxonomy" id="269482"/>
    <lineage>
        <taxon>Bacteria</taxon>
        <taxon>Pseudomonadati</taxon>
        <taxon>Pseudomonadota</taxon>
        <taxon>Betaproteobacteria</taxon>
        <taxon>Burkholderiales</taxon>
        <taxon>Burkholderiaceae</taxon>
        <taxon>Burkholderia</taxon>
        <taxon>Burkholderia cepacia complex</taxon>
    </lineage>
</organism>
<evidence type="ECO:0000255" key="1">
    <source>
        <dbReference type="HAMAP-Rule" id="MF_01302"/>
    </source>
</evidence>
<evidence type="ECO:0000305" key="2"/>
<gene>
    <name evidence="1" type="primary">rpsH</name>
    <name type="ordered locus">Bcep1808_0344</name>
</gene>
<feature type="chain" id="PRO_1000051771" description="Small ribosomal subunit protein uS8">
    <location>
        <begin position="1"/>
        <end position="131"/>
    </location>
</feature>